<comment type="function">
    <text evidence="1">O-methyltransferase that catalyzes the 2 O-methylation steps in the ubiquinone biosynthetic pathway.</text>
</comment>
<comment type="catalytic activity">
    <reaction evidence="1">
        <text>a 3-demethylubiquinol + S-adenosyl-L-methionine = a ubiquinol + S-adenosyl-L-homocysteine + H(+)</text>
        <dbReference type="Rhea" id="RHEA:44380"/>
        <dbReference type="Rhea" id="RHEA-COMP:9566"/>
        <dbReference type="Rhea" id="RHEA-COMP:10914"/>
        <dbReference type="ChEBI" id="CHEBI:15378"/>
        <dbReference type="ChEBI" id="CHEBI:17976"/>
        <dbReference type="ChEBI" id="CHEBI:57856"/>
        <dbReference type="ChEBI" id="CHEBI:59789"/>
        <dbReference type="ChEBI" id="CHEBI:84422"/>
        <dbReference type="EC" id="2.1.1.64"/>
    </reaction>
</comment>
<comment type="catalytic activity">
    <reaction evidence="1">
        <text>a 3-(all-trans-polyprenyl)benzene-1,2-diol + S-adenosyl-L-methionine = a 2-methoxy-6-(all-trans-polyprenyl)phenol + S-adenosyl-L-homocysteine + H(+)</text>
        <dbReference type="Rhea" id="RHEA:31411"/>
        <dbReference type="Rhea" id="RHEA-COMP:9550"/>
        <dbReference type="Rhea" id="RHEA-COMP:9551"/>
        <dbReference type="ChEBI" id="CHEBI:15378"/>
        <dbReference type="ChEBI" id="CHEBI:57856"/>
        <dbReference type="ChEBI" id="CHEBI:59789"/>
        <dbReference type="ChEBI" id="CHEBI:62729"/>
        <dbReference type="ChEBI" id="CHEBI:62731"/>
        <dbReference type="EC" id="2.1.1.222"/>
    </reaction>
</comment>
<comment type="pathway">
    <text evidence="1">Cofactor biosynthesis; ubiquinone biosynthesis.</text>
</comment>
<comment type="similarity">
    <text evidence="1">Belongs to the methyltransferase superfamily. UbiG/COQ3 family.</text>
</comment>
<protein>
    <recommendedName>
        <fullName evidence="1">Ubiquinone biosynthesis O-methyltransferase</fullName>
    </recommendedName>
    <alternativeName>
        <fullName evidence="1">2-polyprenyl-6-hydroxyphenol methylase</fullName>
        <ecNumber evidence="1">2.1.1.222</ecNumber>
    </alternativeName>
    <alternativeName>
        <fullName evidence="1">3-demethylubiquinone 3-O-methyltransferase</fullName>
        <ecNumber evidence="1">2.1.1.64</ecNumber>
    </alternativeName>
</protein>
<keyword id="KW-0489">Methyltransferase</keyword>
<keyword id="KW-0949">S-adenosyl-L-methionine</keyword>
<keyword id="KW-0808">Transferase</keyword>
<keyword id="KW-0831">Ubiquinone biosynthesis</keyword>
<sequence length="242" mass="27466">MRAKTTSRHHNVDEQEIAKFEAVASRWWDLEGEFKPLHRINPLRLNYILQRSGGIFEKKVLDVGCGGGILAESMAREGAQVTGLDMGYEPLQVARLHALETGVKLEYVQETVENHAQQHPQHYDVVTCMEMLEHVPDPASVVRACAQLVKPGGHVFFSTINRNTKSWLMAVVGAEYLLKMVPKGTHDAKKFIRPSELIGWVDQTPLLERHIIGLHYNPITDHFKLGRNVDVNYMVHTQRDSE</sequence>
<gene>
    <name evidence="1" type="primary">ubiG</name>
    <name type="ordered locus">YPA_0929</name>
</gene>
<name>UBIG_YERPA</name>
<reference key="1">
    <citation type="journal article" date="2006" name="J. Bacteriol.">
        <title>Complete genome sequence of Yersinia pestis strains Antiqua and Nepal516: evidence of gene reduction in an emerging pathogen.</title>
        <authorList>
            <person name="Chain P.S.G."/>
            <person name="Hu P."/>
            <person name="Malfatti S.A."/>
            <person name="Radnedge L."/>
            <person name="Larimer F."/>
            <person name="Vergez L.M."/>
            <person name="Worsham P."/>
            <person name="Chu M.C."/>
            <person name="Andersen G.L."/>
        </authorList>
    </citation>
    <scope>NUCLEOTIDE SEQUENCE [LARGE SCALE GENOMIC DNA]</scope>
    <source>
        <strain>Antiqua</strain>
    </source>
</reference>
<dbReference type="EC" id="2.1.1.222" evidence="1"/>
<dbReference type="EC" id="2.1.1.64" evidence="1"/>
<dbReference type="EMBL" id="CP000308">
    <property type="protein sequence ID" value="ABG12897.1"/>
    <property type="molecule type" value="Genomic_DNA"/>
</dbReference>
<dbReference type="RefSeq" id="WP_002210820.1">
    <property type="nucleotide sequence ID" value="NZ_CP009906.1"/>
</dbReference>
<dbReference type="SMR" id="Q1C9H5"/>
<dbReference type="GeneID" id="57977354"/>
<dbReference type="KEGG" id="ypa:YPA_0929"/>
<dbReference type="UniPathway" id="UPA00232"/>
<dbReference type="Proteomes" id="UP000001971">
    <property type="component" value="Chromosome"/>
</dbReference>
<dbReference type="GO" id="GO:0102208">
    <property type="term" value="F:2-polyprenyl-6-hydroxyphenol methylase activity"/>
    <property type="evidence" value="ECO:0007669"/>
    <property type="project" value="UniProtKB-EC"/>
</dbReference>
<dbReference type="GO" id="GO:0061542">
    <property type="term" value="F:3-demethylubiquinol 3-O-methyltransferase activity"/>
    <property type="evidence" value="ECO:0007669"/>
    <property type="project" value="UniProtKB-UniRule"/>
</dbReference>
<dbReference type="GO" id="GO:0010420">
    <property type="term" value="F:polyprenyldihydroxybenzoate methyltransferase activity"/>
    <property type="evidence" value="ECO:0007669"/>
    <property type="project" value="InterPro"/>
</dbReference>
<dbReference type="GO" id="GO:0032259">
    <property type="term" value="P:methylation"/>
    <property type="evidence" value="ECO:0007669"/>
    <property type="project" value="UniProtKB-KW"/>
</dbReference>
<dbReference type="CDD" id="cd02440">
    <property type="entry name" value="AdoMet_MTases"/>
    <property type="match status" value="1"/>
</dbReference>
<dbReference type="FunFam" id="3.40.50.150:FF:000028">
    <property type="entry name" value="Ubiquinone biosynthesis O-methyltransferase"/>
    <property type="match status" value="1"/>
</dbReference>
<dbReference type="Gene3D" id="3.40.50.150">
    <property type="entry name" value="Vaccinia Virus protein VP39"/>
    <property type="match status" value="1"/>
</dbReference>
<dbReference type="HAMAP" id="MF_00472">
    <property type="entry name" value="UbiG"/>
    <property type="match status" value="1"/>
</dbReference>
<dbReference type="InterPro" id="IPR029063">
    <property type="entry name" value="SAM-dependent_MTases_sf"/>
</dbReference>
<dbReference type="InterPro" id="IPR010233">
    <property type="entry name" value="UbiG_MeTrfase"/>
</dbReference>
<dbReference type="NCBIfam" id="TIGR01983">
    <property type="entry name" value="UbiG"/>
    <property type="match status" value="1"/>
</dbReference>
<dbReference type="PANTHER" id="PTHR43464">
    <property type="entry name" value="METHYLTRANSFERASE"/>
    <property type="match status" value="1"/>
</dbReference>
<dbReference type="PANTHER" id="PTHR43464:SF19">
    <property type="entry name" value="UBIQUINONE BIOSYNTHESIS O-METHYLTRANSFERASE, MITOCHONDRIAL"/>
    <property type="match status" value="1"/>
</dbReference>
<dbReference type="Pfam" id="PF13489">
    <property type="entry name" value="Methyltransf_23"/>
    <property type="match status" value="1"/>
</dbReference>
<dbReference type="SUPFAM" id="SSF53335">
    <property type="entry name" value="S-adenosyl-L-methionine-dependent methyltransferases"/>
    <property type="match status" value="1"/>
</dbReference>
<evidence type="ECO:0000255" key="1">
    <source>
        <dbReference type="HAMAP-Rule" id="MF_00472"/>
    </source>
</evidence>
<organism>
    <name type="scientific">Yersinia pestis bv. Antiqua (strain Antiqua)</name>
    <dbReference type="NCBI Taxonomy" id="360102"/>
    <lineage>
        <taxon>Bacteria</taxon>
        <taxon>Pseudomonadati</taxon>
        <taxon>Pseudomonadota</taxon>
        <taxon>Gammaproteobacteria</taxon>
        <taxon>Enterobacterales</taxon>
        <taxon>Yersiniaceae</taxon>
        <taxon>Yersinia</taxon>
    </lineage>
</organism>
<proteinExistence type="inferred from homology"/>
<feature type="chain" id="PRO_1000013933" description="Ubiquinone biosynthesis O-methyltransferase">
    <location>
        <begin position="1"/>
        <end position="242"/>
    </location>
</feature>
<feature type="binding site" evidence="1">
    <location>
        <position position="44"/>
    </location>
    <ligand>
        <name>S-adenosyl-L-methionine</name>
        <dbReference type="ChEBI" id="CHEBI:59789"/>
    </ligand>
</feature>
<feature type="binding site" evidence="1">
    <location>
        <position position="64"/>
    </location>
    <ligand>
        <name>S-adenosyl-L-methionine</name>
        <dbReference type="ChEBI" id="CHEBI:59789"/>
    </ligand>
</feature>
<feature type="binding site" evidence="1">
    <location>
        <position position="85"/>
    </location>
    <ligand>
        <name>S-adenosyl-L-methionine</name>
        <dbReference type="ChEBI" id="CHEBI:59789"/>
    </ligand>
</feature>
<feature type="binding site" evidence="1">
    <location>
        <position position="129"/>
    </location>
    <ligand>
        <name>S-adenosyl-L-methionine</name>
        <dbReference type="ChEBI" id="CHEBI:59789"/>
    </ligand>
</feature>
<accession>Q1C9H5</accession>